<gene>
    <name evidence="1" type="primary">rimM</name>
    <name type="ordered locus">Ajs_3354</name>
</gene>
<proteinExistence type="inferred from homology"/>
<comment type="function">
    <text evidence="1">An accessory protein needed during the final step in the assembly of 30S ribosomal subunit, possibly for assembly of the head region. Essential for efficient processing of 16S rRNA. May be needed both before and after RbfA during the maturation of 16S rRNA. It has affinity for free ribosomal 30S subunits but not for 70S ribosomes.</text>
</comment>
<comment type="subunit">
    <text evidence="1">Binds ribosomal protein uS19.</text>
</comment>
<comment type="subcellular location">
    <subcellularLocation>
        <location evidence="1">Cytoplasm</location>
    </subcellularLocation>
</comment>
<comment type="domain">
    <text evidence="1">The PRC barrel domain binds ribosomal protein uS19.</text>
</comment>
<comment type="similarity">
    <text evidence="1">Belongs to the RimM family.</text>
</comment>
<comment type="sequence caution" evidence="2">
    <conflict type="erroneous initiation">
        <sequence resource="EMBL-CDS" id="ABM43476"/>
    </conflict>
</comment>
<sequence>MPQLPVLETAELPSDAVEVGRITDAWGVKGWFKVLPYSSNPEALLAAKSWLLQPAEKGAKSFFAGTVLLPIRQARTHSDSVVAWAQGVDDRDAAEALRGARIFVPRANFPVAGDDEYYWVDLIGLPVVNREGVALGTVRDLLPTGPQTTLVLAYEHEGKPHERMIPFVSAYVDKVDLAGRCITVDWQPDY</sequence>
<organism>
    <name type="scientific">Acidovorax sp. (strain JS42)</name>
    <dbReference type="NCBI Taxonomy" id="232721"/>
    <lineage>
        <taxon>Bacteria</taxon>
        <taxon>Pseudomonadati</taxon>
        <taxon>Pseudomonadota</taxon>
        <taxon>Betaproteobacteria</taxon>
        <taxon>Burkholderiales</taxon>
        <taxon>Comamonadaceae</taxon>
        <taxon>Acidovorax</taxon>
    </lineage>
</organism>
<protein>
    <recommendedName>
        <fullName evidence="1">Ribosome maturation factor RimM</fullName>
    </recommendedName>
</protein>
<accession>A1WB51</accession>
<dbReference type="EMBL" id="CP000539">
    <property type="protein sequence ID" value="ABM43476.1"/>
    <property type="status" value="ALT_INIT"/>
    <property type="molecule type" value="Genomic_DNA"/>
</dbReference>
<dbReference type="SMR" id="A1WB51"/>
<dbReference type="STRING" id="232721.Ajs_3354"/>
<dbReference type="KEGG" id="ajs:Ajs_3354"/>
<dbReference type="eggNOG" id="COG0806">
    <property type="taxonomic scope" value="Bacteria"/>
</dbReference>
<dbReference type="HOGENOM" id="CLU_077636_1_0_4"/>
<dbReference type="Proteomes" id="UP000000645">
    <property type="component" value="Chromosome"/>
</dbReference>
<dbReference type="GO" id="GO:0005737">
    <property type="term" value="C:cytoplasm"/>
    <property type="evidence" value="ECO:0007669"/>
    <property type="project" value="UniProtKB-SubCell"/>
</dbReference>
<dbReference type="GO" id="GO:0005840">
    <property type="term" value="C:ribosome"/>
    <property type="evidence" value="ECO:0007669"/>
    <property type="project" value="InterPro"/>
</dbReference>
<dbReference type="GO" id="GO:0043022">
    <property type="term" value="F:ribosome binding"/>
    <property type="evidence" value="ECO:0007669"/>
    <property type="project" value="InterPro"/>
</dbReference>
<dbReference type="GO" id="GO:0042274">
    <property type="term" value="P:ribosomal small subunit biogenesis"/>
    <property type="evidence" value="ECO:0007669"/>
    <property type="project" value="UniProtKB-UniRule"/>
</dbReference>
<dbReference type="GO" id="GO:0006364">
    <property type="term" value="P:rRNA processing"/>
    <property type="evidence" value="ECO:0007669"/>
    <property type="project" value="UniProtKB-UniRule"/>
</dbReference>
<dbReference type="Gene3D" id="2.30.30.240">
    <property type="entry name" value="PRC-barrel domain"/>
    <property type="match status" value="1"/>
</dbReference>
<dbReference type="Gene3D" id="2.40.30.60">
    <property type="entry name" value="RimM"/>
    <property type="match status" value="1"/>
</dbReference>
<dbReference type="HAMAP" id="MF_00014">
    <property type="entry name" value="Ribosome_mat_RimM"/>
    <property type="match status" value="1"/>
</dbReference>
<dbReference type="InterPro" id="IPR011033">
    <property type="entry name" value="PRC_barrel-like_sf"/>
</dbReference>
<dbReference type="InterPro" id="IPR056792">
    <property type="entry name" value="PRC_RimM"/>
</dbReference>
<dbReference type="InterPro" id="IPR011961">
    <property type="entry name" value="RimM"/>
</dbReference>
<dbReference type="InterPro" id="IPR002676">
    <property type="entry name" value="RimM_N"/>
</dbReference>
<dbReference type="InterPro" id="IPR036976">
    <property type="entry name" value="RimM_N_sf"/>
</dbReference>
<dbReference type="InterPro" id="IPR009000">
    <property type="entry name" value="Transl_B-barrel_sf"/>
</dbReference>
<dbReference type="NCBIfam" id="TIGR02273">
    <property type="entry name" value="16S_RimM"/>
    <property type="match status" value="1"/>
</dbReference>
<dbReference type="PANTHER" id="PTHR33692">
    <property type="entry name" value="RIBOSOME MATURATION FACTOR RIMM"/>
    <property type="match status" value="1"/>
</dbReference>
<dbReference type="PANTHER" id="PTHR33692:SF1">
    <property type="entry name" value="RIBOSOME MATURATION FACTOR RIMM"/>
    <property type="match status" value="1"/>
</dbReference>
<dbReference type="Pfam" id="PF24986">
    <property type="entry name" value="PRC_RimM"/>
    <property type="match status" value="1"/>
</dbReference>
<dbReference type="Pfam" id="PF01782">
    <property type="entry name" value="RimM"/>
    <property type="match status" value="1"/>
</dbReference>
<dbReference type="SUPFAM" id="SSF50346">
    <property type="entry name" value="PRC-barrel domain"/>
    <property type="match status" value="1"/>
</dbReference>
<dbReference type="SUPFAM" id="SSF50447">
    <property type="entry name" value="Translation proteins"/>
    <property type="match status" value="1"/>
</dbReference>
<reference key="1">
    <citation type="submission" date="2006-12" db="EMBL/GenBank/DDBJ databases">
        <title>Complete sequence of chromosome 1 of Acidovorax sp. JS42.</title>
        <authorList>
            <person name="Copeland A."/>
            <person name="Lucas S."/>
            <person name="Lapidus A."/>
            <person name="Barry K."/>
            <person name="Detter J.C."/>
            <person name="Glavina del Rio T."/>
            <person name="Dalin E."/>
            <person name="Tice H."/>
            <person name="Pitluck S."/>
            <person name="Chertkov O."/>
            <person name="Brettin T."/>
            <person name="Bruce D."/>
            <person name="Han C."/>
            <person name="Tapia R."/>
            <person name="Gilna P."/>
            <person name="Schmutz J."/>
            <person name="Larimer F."/>
            <person name="Land M."/>
            <person name="Hauser L."/>
            <person name="Kyrpides N."/>
            <person name="Kim E."/>
            <person name="Stahl D."/>
            <person name="Richardson P."/>
        </authorList>
    </citation>
    <scope>NUCLEOTIDE SEQUENCE [LARGE SCALE GENOMIC DNA]</scope>
    <source>
        <strain>JS42</strain>
    </source>
</reference>
<keyword id="KW-0143">Chaperone</keyword>
<keyword id="KW-0963">Cytoplasm</keyword>
<keyword id="KW-0690">Ribosome biogenesis</keyword>
<keyword id="KW-0698">rRNA processing</keyword>
<evidence type="ECO:0000255" key="1">
    <source>
        <dbReference type="HAMAP-Rule" id="MF_00014"/>
    </source>
</evidence>
<evidence type="ECO:0000305" key="2"/>
<name>RIMM_ACISJ</name>
<feature type="chain" id="PRO_0000351715" description="Ribosome maturation factor RimM">
    <location>
        <begin position="1"/>
        <end position="190"/>
    </location>
</feature>
<feature type="domain" description="PRC barrel" evidence="1">
    <location>
        <begin position="114"/>
        <end position="190"/>
    </location>
</feature>